<evidence type="ECO:0000255" key="1">
    <source>
        <dbReference type="HAMAP-Rule" id="MF_00067"/>
    </source>
</evidence>
<comment type="function">
    <text evidence="1">Catalyzes the isomerization of sedoheptulose 7-phosphate in D-glycero-D-manno-heptose 7-phosphate.</text>
</comment>
<comment type="catalytic activity">
    <reaction evidence="1">
        <text>2 D-sedoheptulose 7-phosphate = D-glycero-alpha-D-manno-heptose 7-phosphate + D-glycero-beta-D-manno-heptose 7-phosphate</text>
        <dbReference type="Rhea" id="RHEA:27489"/>
        <dbReference type="ChEBI" id="CHEBI:57483"/>
        <dbReference type="ChEBI" id="CHEBI:60203"/>
        <dbReference type="ChEBI" id="CHEBI:60204"/>
        <dbReference type="EC" id="5.3.1.28"/>
    </reaction>
</comment>
<comment type="cofactor">
    <cofactor evidence="1">
        <name>Zn(2+)</name>
        <dbReference type="ChEBI" id="CHEBI:29105"/>
    </cofactor>
    <text evidence="1">Binds 1 zinc ion per subunit.</text>
</comment>
<comment type="pathway">
    <text evidence="1">Carbohydrate biosynthesis; D-glycero-D-manno-heptose 7-phosphate biosynthesis; D-glycero-alpha-D-manno-heptose 7-phosphate and D-glycero-beta-D-manno-heptose 7-phosphate from sedoheptulose 7-phosphate: step 1/1.</text>
</comment>
<comment type="subunit">
    <text evidence="1">Homotetramer.</text>
</comment>
<comment type="subcellular location">
    <subcellularLocation>
        <location evidence="1">Cytoplasm</location>
    </subcellularLocation>
</comment>
<comment type="miscellaneous">
    <text evidence="1">The reaction produces a racemic mixture of D-glycero-alpha-D-manno-heptose 7-phosphate and D-glycero-beta-D-manno-heptose 7-phosphate.</text>
</comment>
<comment type="similarity">
    <text evidence="1">Belongs to the SIS family. GmhA subfamily.</text>
</comment>
<reference key="1">
    <citation type="journal article" date="2009" name="BMC Microbiol.">
        <title>The genome sequence of Geobacter metallireducens: features of metabolism, physiology and regulation common and dissimilar to Geobacter sulfurreducens.</title>
        <authorList>
            <person name="Aklujkar M."/>
            <person name="Krushkal J."/>
            <person name="DiBartolo G."/>
            <person name="Lapidus A."/>
            <person name="Land M.L."/>
            <person name="Lovley D.R."/>
        </authorList>
    </citation>
    <scope>NUCLEOTIDE SEQUENCE [LARGE SCALE GENOMIC DNA]</scope>
    <source>
        <strain>ATCC 53774 / DSM 7210 / GS-15</strain>
    </source>
</reference>
<dbReference type="EC" id="5.3.1.28" evidence="1"/>
<dbReference type="EMBL" id="CP000148">
    <property type="protein sequence ID" value="ABB31162.1"/>
    <property type="molecule type" value="Genomic_DNA"/>
</dbReference>
<dbReference type="RefSeq" id="WP_004513950.1">
    <property type="nucleotide sequence ID" value="NC_007517.1"/>
</dbReference>
<dbReference type="SMR" id="Q39X62"/>
<dbReference type="STRING" id="269799.Gmet_0920"/>
<dbReference type="KEGG" id="gme:Gmet_0920"/>
<dbReference type="eggNOG" id="COG0279">
    <property type="taxonomic scope" value="Bacteria"/>
</dbReference>
<dbReference type="HOGENOM" id="CLU_080999_4_0_7"/>
<dbReference type="UniPathway" id="UPA00041">
    <property type="reaction ID" value="UER00436"/>
</dbReference>
<dbReference type="Proteomes" id="UP000007073">
    <property type="component" value="Chromosome"/>
</dbReference>
<dbReference type="GO" id="GO:0005737">
    <property type="term" value="C:cytoplasm"/>
    <property type="evidence" value="ECO:0007669"/>
    <property type="project" value="UniProtKB-SubCell"/>
</dbReference>
<dbReference type="GO" id="GO:0097367">
    <property type="term" value="F:carbohydrate derivative binding"/>
    <property type="evidence" value="ECO:0007669"/>
    <property type="project" value="InterPro"/>
</dbReference>
<dbReference type="GO" id="GO:0008968">
    <property type="term" value="F:D-sedoheptulose 7-phosphate isomerase activity"/>
    <property type="evidence" value="ECO:0007669"/>
    <property type="project" value="UniProtKB-UniRule"/>
</dbReference>
<dbReference type="GO" id="GO:0008270">
    <property type="term" value="F:zinc ion binding"/>
    <property type="evidence" value="ECO:0007669"/>
    <property type="project" value="UniProtKB-UniRule"/>
</dbReference>
<dbReference type="GO" id="GO:0005975">
    <property type="term" value="P:carbohydrate metabolic process"/>
    <property type="evidence" value="ECO:0007669"/>
    <property type="project" value="UniProtKB-UniRule"/>
</dbReference>
<dbReference type="GO" id="GO:2001061">
    <property type="term" value="P:D-glycero-D-manno-heptose 7-phosphate biosynthetic process"/>
    <property type="evidence" value="ECO:0007669"/>
    <property type="project" value="UniProtKB-UniPathway"/>
</dbReference>
<dbReference type="CDD" id="cd05006">
    <property type="entry name" value="SIS_GmhA"/>
    <property type="match status" value="1"/>
</dbReference>
<dbReference type="Gene3D" id="3.40.50.10490">
    <property type="entry name" value="Glucose-6-phosphate isomerase like protein, domain 1"/>
    <property type="match status" value="1"/>
</dbReference>
<dbReference type="HAMAP" id="MF_00067">
    <property type="entry name" value="GmhA"/>
    <property type="match status" value="1"/>
</dbReference>
<dbReference type="InterPro" id="IPR035461">
    <property type="entry name" value="GmhA/DiaA"/>
</dbReference>
<dbReference type="InterPro" id="IPR004515">
    <property type="entry name" value="Phosphoheptose_Isoase"/>
</dbReference>
<dbReference type="InterPro" id="IPR001347">
    <property type="entry name" value="SIS_dom"/>
</dbReference>
<dbReference type="InterPro" id="IPR046348">
    <property type="entry name" value="SIS_dom_sf"/>
</dbReference>
<dbReference type="InterPro" id="IPR050099">
    <property type="entry name" value="SIS_GmhA/DiaA_subfam"/>
</dbReference>
<dbReference type="PANTHER" id="PTHR30390:SF6">
    <property type="entry name" value="DNAA INITIATOR-ASSOCIATING PROTEIN DIAA"/>
    <property type="match status" value="1"/>
</dbReference>
<dbReference type="PANTHER" id="PTHR30390">
    <property type="entry name" value="SEDOHEPTULOSE 7-PHOSPHATE ISOMERASE / DNAA INITIATOR-ASSOCIATING FACTOR FOR REPLICATION INITIATION"/>
    <property type="match status" value="1"/>
</dbReference>
<dbReference type="Pfam" id="PF13580">
    <property type="entry name" value="SIS_2"/>
    <property type="match status" value="1"/>
</dbReference>
<dbReference type="SUPFAM" id="SSF53697">
    <property type="entry name" value="SIS domain"/>
    <property type="match status" value="1"/>
</dbReference>
<dbReference type="PROSITE" id="PS51464">
    <property type="entry name" value="SIS"/>
    <property type="match status" value="1"/>
</dbReference>
<gene>
    <name evidence="1" type="primary">gmhA</name>
    <name type="ordered locus">Gmet_0920</name>
</gene>
<keyword id="KW-0119">Carbohydrate metabolism</keyword>
<keyword id="KW-0963">Cytoplasm</keyword>
<keyword id="KW-0413">Isomerase</keyword>
<keyword id="KW-0479">Metal-binding</keyword>
<keyword id="KW-1185">Reference proteome</keyword>
<keyword id="KW-0862">Zinc</keyword>
<accession>Q39X62</accession>
<name>GMHA_GEOMG</name>
<sequence>MNEEIMTQLRSHREVMEAVERELTPRIAAFAGMLVAALKGGKKLLVMGNGGSAADAQHFAAEIVGRFKMERRGLPAVALTTDTSILTAIGNDYGFDAVFRRQVEALADEGDVVVGLSTSGSSRNVYDALALANDRGCITVGLLGRDGGTLKDIVDLDVTVPSGDTPRIQEGHITIIHIVCDLVEKGLFK</sequence>
<proteinExistence type="inferred from homology"/>
<organism>
    <name type="scientific">Geobacter metallireducens (strain ATCC 53774 / DSM 7210 / GS-15)</name>
    <dbReference type="NCBI Taxonomy" id="269799"/>
    <lineage>
        <taxon>Bacteria</taxon>
        <taxon>Pseudomonadati</taxon>
        <taxon>Thermodesulfobacteriota</taxon>
        <taxon>Desulfuromonadia</taxon>
        <taxon>Geobacterales</taxon>
        <taxon>Geobacteraceae</taxon>
        <taxon>Geobacter</taxon>
    </lineage>
</organism>
<feature type="chain" id="PRO_1000009066" description="Phosphoheptose isomerase">
    <location>
        <begin position="1"/>
        <end position="189"/>
    </location>
</feature>
<feature type="domain" description="SIS" evidence="1">
    <location>
        <begin position="34"/>
        <end position="189"/>
    </location>
</feature>
<feature type="binding site" evidence="1">
    <location>
        <begin position="49"/>
        <end position="51"/>
    </location>
    <ligand>
        <name>substrate</name>
    </ligand>
</feature>
<feature type="binding site" evidence="1">
    <location>
        <position position="58"/>
    </location>
    <ligand>
        <name>Zn(2+)</name>
        <dbReference type="ChEBI" id="CHEBI:29105"/>
    </ligand>
</feature>
<feature type="binding site" evidence="1">
    <location>
        <position position="62"/>
    </location>
    <ligand>
        <name>substrate</name>
    </ligand>
</feature>
<feature type="binding site" evidence="1">
    <location>
        <position position="62"/>
    </location>
    <ligand>
        <name>Zn(2+)</name>
        <dbReference type="ChEBI" id="CHEBI:29105"/>
    </ligand>
</feature>
<feature type="binding site" evidence="1">
    <location>
        <begin position="91"/>
        <end position="92"/>
    </location>
    <ligand>
        <name>substrate</name>
    </ligand>
</feature>
<feature type="binding site" evidence="1">
    <location>
        <begin position="117"/>
        <end position="119"/>
    </location>
    <ligand>
        <name>substrate</name>
    </ligand>
</feature>
<feature type="binding site" evidence="1">
    <location>
        <position position="122"/>
    </location>
    <ligand>
        <name>substrate</name>
    </ligand>
</feature>
<feature type="binding site" evidence="1">
    <location>
        <position position="169"/>
    </location>
    <ligand>
        <name>substrate</name>
    </ligand>
</feature>
<feature type="binding site" evidence="1">
    <location>
        <position position="169"/>
    </location>
    <ligand>
        <name>Zn(2+)</name>
        <dbReference type="ChEBI" id="CHEBI:29105"/>
    </ligand>
</feature>
<feature type="binding site" evidence="1">
    <location>
        <position position="177"/>
    </location>
    <ligand>
        <name>Zn(2+)</name>
        <dbReference type="ChEBI" id="CHEBI:29105"/>
    </ligand>
</feature>
<protein>
    <recommendedName>
        <fullName evidence="1">Phosphoheptose isomerase</fullName>
        <ecNumber evidence="1">5.3.1.28</ecNumber>
    </recommendedName>
    <alternativeName>
        <fullName evidence="1">Sedoheptulose 7-phosphate isomerase</fullName>
    </alternativeName>
</protein>